<reference key="1">
    <citation type="submission" date="2008-05" db="EMBL/GenBank/DDBJ databases">
        <title>Genome sequence of Helicobacter pylori from the remote Amazon: traces of Asian ancestry of the first Americans.</title>
        <authorList>
            <person name="Kersulyte D."/>
            <person name="Kalia A."/>
            <person name="Gilman R.H."/>
            <person name="Berg D.E."/>
        </authorList>
    </citation>
    <scope>NUCLEOTIDE SEQUENCE [LARGE SCALE GENOMIC DNA]</scope>
    <source>
        <strain>Shi470</strain>
    </source>
</reference>
<name>MINE_HELPS</name>
<accession>B2USG3</accession>
<evidence type="ECO:0000255" key="1">
    <source>
        <dbReference type="HAMAP-Rule" id="MF_00262"/>
    </source>
</evidence>
<dbReference type="EMBL" id="CP001072">
    <property type="protein sequence ID" value="ACD47795.1"/>
    <property type="molecule type" value="Genomic_DNA"/>
</dbReference>
<dbReference type="RefSeq" id="WP_000051411.1">
    <property type="nucleotide sequence ID" value="NC_010698.2"/>
</dbReference>
<dbReference type="SMR" id="B2USG3"/>
<dbReference type="KEGG" id="hps:HPSH_01725"/>
<dbReference type="HOGENOM" id="CLU_137929_2_1_7"/>
<dbReference type="GO" id="GO:0051301">
    <property type="term" value="P:cell division"/>
    <property type="evidence" value="ECO:0007669"/>
    <property type="project" value="UniProtKB-KW"/>
</dbReference>
<dbReference type="GO" id="GO:0032955">
    <property type="term" value="P:regulation of division septum assembly"/>
    <property type="evidence" value="ECO:0007669"/>
    <property type="project" value="InterPro"/>
</dbReference>
<dbReference type="Gene3D" id="3.30.1070.10">
    <property type="entry name" value="Cell division topological specificity factor MinE"/>
    <property type="match status" value="1"/>
</dbReference>
<dbReference type="HAMAP" id="MF_00262">
    <property type="entry name" value="MinE"/>
    <property type="match status" value="1"/>
</dbReference>
<dbReference type="InterPro" id="IPR005527">
    <property type="entry name" value="MinE"/>
</dbReference>
<dbReference type="InterPro" id="IPR036707">
    <property type="entry name" value="MinE_sf"/>
</dbReference>
<dbReference type="NCBIfam" id="TIGR01215">
    <property type="entry name" value="minE"/>
    <property type="match status" value="1"/>
</dbReference>
<dbReference type="NCBIfam" id="NF001422">
    <property type="entry name" value="PRK00296.1"/>
    <property type="match status" value="1"/>
</dbReference>
<dbReference type="Pfam" id="PF03776">
    <property type="entry name" value="MinE"/>
    <property type="match status" value="1"/>
</dbReference>
<dbReference type="SUPFAM" id="SSF55229">
    <property type="entry name" value="Cell division protein MinE topological specificity domain"/>
    <property type="match status" value="1"/>
</dbReference>
<gene>
    <name evidence="1" type="primary">minE</name>
    <name type="ordered locus">HPSH_01725</name>
</gene>
<organism>
    <name type="scientific">Helicobacter pylori (strain Shi470)</name>
    <dbReference type="NCBI Taxonomy" id="512562"/>
    <lineage>
        <taxon>Bacteria</taxon>
        <taxon>Pseudomonadati</taxon>
        <taxon>Campylobacterota</taxon>
        <taxon>Epsilonproteobacteria</taxon>
        <taxon>Campylobacterales</taxon>
        <taxon>Helicobacteraceae</taxon>
        <taxon>Helicobacter</taxon>
    </lineage>
</organism>
<feature type="chain" id="PRO_1000114225" description="Cell division topological specificity factor">
    <location>
        <begin position="1"/>
        <end position="77"/>
    </location>
</feature>
<proteinExistence type="inferred from homology"/>
<keyword id="KW-0131">Cell cycle</keyword>
<keyword id="KW-0132">Cell division</keyword>
<sequence>MSLFDFFKNKGSAATATDRLKLILAKERTLNLPYMEEMRKEIIAVIQKYTKSSDIHFKTIDGNQSVETIEVEIILPK</sequence>
<comment type="function">
    <text evidence="1">Prevents the cell division inhibition by proteins MinC and MinD at internal division sites while permitting inhibition at polar sites. This ensures cell division at the proper site by restricting the formation of a division septum at the midpoint of the long axis of the cell.</text>
</comment>
<comment type="similarity">
    <text evidence="1">Belongs to the MinE family.</text>
</comment>
<protein>
    <recommendedName>
        <fullName evidence="1">Cell division topological specificity factor</fullName>
    </recommendedName>
</protein>